<sequence>MVSIAAKSLPKLSGAVFGQFSRRKQLIQRHWLDTRTDQYYDVLRRIVVPECKNIASDVPEYPERIEKLLYYTNPAFSDAWNFTTELIYRTVADESHQTEENITKMYLIRATMDLLFTMSAVLDDISDRSEFRKGKKGWHMICQGGESTALYDGTQMGLFPLYLLKQYFKNDPGYSRLLETVVMTYIKLTIGQTIDVLGQFKKSPSMAEYKRINYYKAGQFVAAGSELAVIHAGITSQDLIDKTVEIFTIAGQIIQTWDDFNDYYSSSEQNGKLSCDFMNAGTTWVSAKAMEVFTPSQAVKFMECYGSDDQSKMKTVQELYDEIDMPKLYTEYVLENYNRCETLIKELPHDRLREACSSYMEWLVVRETPDEDSEHKVALCLNISG</sequence>
<evidence type="ECO:0000250" key="1">
    <source>
        <dbReference type="UniProtKB" id="P14324"/>
    </source>
</evidence>
<evidence type="ECO:0000269" key="2">
    <source>
    </source>
</evidence>
<evidence type="ECO:0000303" key="3">
    <source>
    </source>
</evidence>
<evidence type="ECO:0000305" key="4"/>
<evidence type="ECO:0000312" key="5">
    <source>
        <dbReference type="EMBL" id="AVZ23977.1"/>
    </source>
</evidence>
<reference evidence="5" key="1">
    <citation type="journal article" date="2018" name="Proc. Natl. Acad. Sci. U.S.A.">
        <title>De novo formation of an aggregation pheromone precursor by an isoprenyl diphosphate synthase-related terpene synthase in the harlequin bug.</title>
        <authorList>
            <person name="Lancaster J."/>
            <person name="Khrimian A."/>
            <person name="Young S."/>
            <person name="Lehner B."/>
            <person name="Luck K."/>
            <person name="Wallingford A."/>
            <person name="Ghosh S.K.B."/>
            <person name="Zerbe P."/>
            <person name="Muchlinski A."/>
            <person name="Marek P.E."/>
            <person name="Sparks M.E."/>
            <person name="Tokuhisa J.G."/>
            <person name="Tittiger C."/>
            <person name="Koellner T.G."/>
            <person name="Weber D.C."/>
            <person name="Gundersen-Rindal D.E."/>
            <person name="Kuhar T.P."/>
            <person name="Tholl D."/>
        </authorList>
    </citation>
    <scope>NUCLEOTIDE SEQUENCE [MRNA]</scope>
    <scope>FUNCTION</scope>
    <scope>CATALYTIC ACTIVITY</scope>
    <scope>PATHWAY</scope>
    <scope>TISSUE SPECIFICITY</scope>
    <scope>MUTAGENESIS OF 77-SER--TRP-80 AND 118-MET-SER-119</scope>
</reference>
<feature type="chain" id="PRO_0000455286" description="Sesquiterpene alcohol synthase">
    <location>
        <begin position="1"/>
        <end position="385"/>
    </location>
</feature>
<feature type="short sequence motif" description="DDXXD motif" evidence="4">
    <location>
        <begin position="123"/>
        <end position="127"/>
    </location>
</feature>
<feature type="binding site" evidence="1">
    <location>
        <position position="123"/>
    </location>
    <ligand>
        <name>Mg(2+)</name>
        <dbReference type="ChEBI" id="CHEBI:18420"/>
        <label>1</label>
    </ligand>
</feature>
<feature type="binding site" evidence="1">
    <location>
        <position position="123"/>
    </location>
    <ligand>
        <name>Mg(2+)</name>
        <dbReference type="ChEBI" id="CHEBI:18420"/>
        <label>2</label>
    </ligand>
</feature>
<feature type="binding site" evidence="1">
    <location>
        <position position="127"/>
    </location>
    <ligand>
        <name>Mg(2+)</name>
        <dbReference type="ChEBI" id="CHEBI:18420"/>
        <label>1</label>
    </ligand>
</feature>
<feature type="binding site" evidence="1">
    <location>
        <position position="127"/>
    </location>
    <ligand>
        <name>Mg(2+)</name>
        <dbReference type="ChEBI" id="CHEBI:18420"/>
        <label>2</label>
    </ligand>
</feature>
<feature type="mutagenesis site" description="Abolished sesquiterpene alcohol synthase activity." evidence="2">
    <original>SDAW</original>
    <variation>KKVR</variation>
    <location>
        <begin position="77"/>
        <end position="80"/>
    </location>
</feature>
<feature type="mutagenesis site" description="Abolished sesquiterpene alcohol synthase activity." evidence="2">
    <original>MS</original>
    <variation>FF</variation>
    <location>
        <begin position="118"/>
        <end position="119"/>
    </location>
</feature>
<accession>A0A343W969</accession>
<gene>
    <name evidence="3" type="primary">TPS</name>
</gene>
<proteinExistence type="evidence at protein level"/>
<keyword id="KW-0414">Isoprene biosynthesis</keyword>
<keyword id="KW-0460">Magnesium</keyword>
<keyword id="KW-0479">Metal-binding</keyword>
<keyword id="KW-0808">Transferase</keyword>
<comment type="function">
    <text evidence="2">Sesquiterpene alcohol synthase that catalyzes the formation of (1S,6S,7R)-sesquipiperitol, a terpene intermediate in murgantiol biosynthesis, a male-released aggregation pheromone.</text>
</comment>
<comment type="catalytic activity">
    <reaction evidence="2">
        <text>(2E,6E)-farnesyl diphosphate + H2O = (1S,6S,7R)-sesquipiperitol + diphosphate</text>
        <dbReference type="Rhea" id="RHEA:68852"/>
        <dbReference type="ChEBI" id="CHEBI:15377"/>
        <dbReference type="ChEBI" id="CHEBI:33019"/>
        <dbReference type="ChEBI" id="CHEBI:173121"/>
        <dbReference type="ChEBI" id="CHEBI:175763"/>
    </reaction>
</comment>
<comment type="cofactor">
    <cofactor evidence="1">
        <name>Mg(2+)</name>
        <dbReference type="ChEBI" id="CHEBI:18420"/>
    </cofactor>
    <text evidence="1">Binds 2 Mg(2+) ions per subunit.</text>
</comment>
<comment type="pathway">
    <text evidence="2">Pheromone biosynthesis.</text>
</comment>
<comment type="tissue specificity">
    <text evidence="2">Specifically expressed in tissues lining the cuticle of the abdominal sternites of mature males.</text>
</comment>
<comment type="domain">
    <text evidence="4">The Asp-Asp-Xaa-Xaa-Asp/Glu (DDXXD/E) motif is important for the catalytic activity, presumably through binding to Mg(2+).</text>
</comment>
<comment type="similarity">
    <text evidence="4">Belongs to the terpene synthase family.</text>
</comment>
<dbReference type="EC" id="2.5.1.-" evidence="2"/>
<dbReference type="EMBL" id="MG662378">
    <property type="protein sequence ID" value="AVZ23977.1"/>
    <property type="molecule type" value="mRNA"/>
</dbReference>
<dbReference type="SMR" id="A0A343W969"/>
<dbReference type="GO" id="GO:0005737">
    <property type="term" value="C:cytoplasm"/>
    <property type="evidence" value="ECO:0007669"/>
    <property type="project" value="TreeGrafter"/>
</dbReference>
<dbReference type="GO" id="GO:0004337">
    <property type="term" value="F:(2E,6E)-farnesyl diphosphate synthase activity"/>
    <property type="evidence" value="ECO:0007669"/>
    <property type="project" value="TreeGrafter"/>
</dbReference>
<dbReference type="GO" id="GO:0004161">
    <property type="term" value="F:dimethylallyltranstransferase activity"/>
    <property type="evidence" value="ECO:0007669"/>
    <property type="project" value="TreeGrafter"/>
</dbReference>
<dbReference type="GO" id="GO:0046872">
    <property type="term" value="F:metal ion binding"/>
    <property type="evidence" value="ECO:0007669"/>
    <property type="project" value="UniProtKB-KW"/>
</dbReference>
<dbReference type="GO" id="GO:0010334">
    <property type="term" value="F:sesquiterpene synthase activity"/>
    <property type="evidence" value="ECO:0000314"/>
    <property type="project" value="UniProtKB"/>
</dbReference>
<dbReference type="GO" id="GO:0045337">
    <property type="term" value="P:farnesyl diphosphate biosynthetic process"/>
    <property type="evidence" value="ECO:0007669"/>
    <property type="project" value="TreeGrafter"/>
</dbReference>
<dbReference type="GO" id="GO:0008299">
    <property type="term" value="P:isoprenoid biosynthetic process"/>
    <property type="evidence" value="ECO:0000314"/>
    <property type="project" value="UniProtKB"/>
</dbReference>
<dbReference type="GO" id="GO:0042811">
    <property type="term" value="P:pheromone biosynthetic process"/>
    <property type="evidence" value="ECO:0000314"/>
    <property type="project" value="UniProtKB"/>
</dbReference>
<dbReference type="CDD" id="cd00867">
    <property type="entry name" value="Trans_IPPS"/>
    <property type="match status" value="1"/>
</dbReference>
<dbReference type="Gene3D" id="1.10.600.10">
    <property type="entry name" value="Farnesyl Diphosphate Synthase"/>
    <property type="match status" value="1"/>
</dbReference>
<dbReference type="InterPro" id="IPR039702">
    <property type="entry name" value="FPS1-like"/>
</dbReference>
<dbReference type="InterPro" id="IPR008949">
    <property type="entry name" value="Isoprenoid_synthase_dom_sf"/>
</dbReference>
<dbReference type="InterPro" id="IPR000092">
    <property type="entry name" value="Polyprenyl_synt"/>
</dbReference>
<dbReference type="PANTHER" id="PTHR11525:SF0">
    <property type="entry name" value="FARNESYL PYROPHOSPHATE SYNTHASE"/>
    <property type="match status" value="1"/>
</dbReference>
<dbReference type="PANTHER" id="PTHR11525">
    <property type="entry name" value="FARNESYL-PYROPHOSPHATE SYNTHETASE"/>
    <property type="match status" value="1"/>
</dbReference>
<dbReference type="Pfam" id="PF00348">
    <property type="entry name" value="polyprenyl_synt"/>
    <property type="match status" value="1"/>
</dbReference>
<dbReference type="SUPFAM" id="SSF48576">
    <property type="entry name" value="Terpenoid synthases"/>
    <property type="match status" value="1"/>
</dbReference>
<protein>
    <recommendedName>
        <fullName evidence="3">Sesquiterpene alcohol synthase</fullName>
        <shortName evidence="3">MhTPS</shortName>
        <ecNumber evidence="2">2.5.1.-</ecNumber>
    </recommendedName>
</protein>
<name>TPS_MURHI</name>
<organism>
    <name type="scientific">Murgantia histrionica</name>
    <name type="common">Harlequin bug</name>
    <dbReference type="NCBI Taxonomy" id="460024"/>
    <lineage>
        <taxon>Eukaryota</taxon>
        <taxon>Metazoa</taxon>
        <taxon>Ecdysozoa</taxon>
        <taxon>Arthropoda</taxon>
        <taxon>Hexapoda</taxon>
        <taxon>Insecta</taxon>
        <taxon>Pterygota</taxon>
        <taxon>Neoptera</taxon>
        <taxon>Paraneoptera</taxon>
        <taxon>Hemiptera</taxon>
        <taxon>Heteroptera</taxon>
        <taxon>Panheteroptera</taxon>
        <taxon>Pentatomomorpha</taxon>
        <taxon>Pentatomoidea</taxon>
        <taxon>Pentatomidae</taxon>
        <taxon>Pentatominae</taxon>
        <taxon>Murgantia</taxon>
    </lineage>
</organism>